<name>YP250_YEAST</name>
<proteinExistence type="uncertain"/>
<sequence length="95" mass="10161">MTTRGSNDVVHFFDLSLGSGERTQSLLGDLSGSLFTGVSDQIDQSSFIWGQTGDFSNQRSDELGSVGGSTLLVGDLWGWSHLGDFLTLVQTNSDT</sequence>
<evidence type="ECO:0000305" key="1"/>
<evidence type="ECO:0000305" key="2">
    <source>
    </source>
</evidence>
<gene>
    <name type="ordered locus">YPL250W-A</name>
    <name type="ORF">smORF640</name>
</gene>
<feature type="chain" id="PRO_0000309068" description="Putative uncharacterized protein YPL250W-A">
    <location>
        <begin position="1"/>
        <end position="95"/>
    </location>
</feature>
<reference key="1">
    <citation type="journal article" date="1997" name="Nature">
        <title>The nucleotide sequence of Saccharomyces cerevisiae chromosome XVI.</title>
        <authorList>
            <person name="Bussey H."/>
            <person name="Storms R.K."/>
            <person name="Ahmed A."/>
            <person name="Albermann K."/>
            <person name="Allen E."/>
            <person name="Ansorge W."/>
            <person name="Araujo R."/>
            <person name="Aparicio A."/>
            <person name="Barrell B.G."/>
            <person name="Badcock K."/>
            <person name="Benes V."/>
            <person name="Botstein D."/>
            <person name="Bowman S."/>
            <person name="Brueckner M."/>
            <person name="Carpenter J."/>
            <person name="Cherry J.M."/>
            <person name="Chung E."/>
            <person name="Churcher C.M."/>
            <person name="Coster F."/>
            <person name="Davis K."/>
            <person name="Davis R.W."/>
            <person name="Dietrich F.S."/>
            <person name="Delius H."/>
            <person name="DiPaolo T."/>
            <person name="Dubois E."/>
            <person name="Duesterhoeft A."/>
            <person name="Duncan M."/>
            <person name="Floeth M."/>
            <person name="Fortin N."/>
            <person name="Friesen J.D."/>
            <person name="Fritz C."/>
            <person name="Goffeau A."/>
            <person name="Hall J."/>
            <person name="Hebling U."/>
            <person name="Heumann K."/>
            <person name="Hilbert H."/>
            <person name="Hillier L.W."/>
            <person name="Hunicke-Smith S."/>
            <person name="Hyman R.W."/>
            <person name="Johnston M."/>
            <person name="Kalman S."/>
            <person name="Kleine K."/>
            <person name="Komp C."/>
            <person name="Kurdi O."/>
            <person name="Lashkari D."/>
            <person name="Lew H."/>
            <person name="Lin A."/>
            <person name="Lin D."/>
            <person name="Louis E.J."/>
            <person name="Marathe R."/>
            <person name="Messenguy F."/>
            <person name="Mewes H.-W."/>
            <person name="Mirtipati S."/>
            <person name="Moestl D."/>
            <person name="Mueller-Auer S."/>
            <person name="Namath A."/>
            <person name="Nentwich U."/>
            <person name="Oefner P."/>
            <person name="Pearson D."/>
            <person name="Petel F.X."/>
            <person name="Pohl T.M."/>
            <person name="Purnelle B."/>
            <person name="Rajandream M.A."/>
            <person name="Rechmann S."/>
            <person name="Rieger M."/>
            <person name="Riles L."/>
            <person name="Roberts D."/>
            <person name="Schaefer M."/>
            <person name="Scharfe M."/>
            <person name="Scherens B."/>
            <person name="Schramm S."/>
            <person name="Schroeder M."/>
            <person name="Sdicu A.-M."/>
            <person name="Tettelin H."/>
            <person name="Urrestarazu L.A."/>
            <person name="Ushinsky S."/>
            <person name="Vierendeels F."/>
            <person name="Vissers S."/>
            <person name="Voss H."/>
            <person name="Walsh S.V."/>
            <person name="Wambutt R."/>
            <person name="Wang Y."/>
            <person name="Wedler E."/>
            <person name="Wedler H."/>
            <person name="Winnett E."/>
            <person name="Zhong W.-W."/>
            <person name="Zollner A."/>
            <person name="Vo D.H."/>
            <person name="Hani J."/>
        </authorList>
    </citation>
    <scope>NUCLEOTIDE SEQUENCE [LARGE SCALE GENOMIC DNA]</scope>
    <source>
        <strain>ATCC 204508 / S288c</strain>
    </source>
</reference>
<reference key="2">
    <citation type="journal article" date="2014" name="G3 (Bethesda)">
        <title>The reference genome sequence of Saccharomyces cerevisiae: Then and now.</title>
        <authorList>
            <person name="Engel S.R."/>
            <person name="Dietrich F.S."/>
            <person name="Fisk D.G."/>
            <person name="Binkley G."/>
            <person name="Balakrishnan R."/>
            <person name="Costanzo M.C."/>
            <person name="Dwight S.S."/>
            <person name="Hitz B.C."/>
            <person name="Karra K."/>
            <person name="Nash R.S."/>
            <person name="Weng S."/>
            <person name="Wong E.D."/>
            <person name="Lloyd P."/>
            <person name="Skrzypek M.S."/>
            <person name="Miyasato S.R."/>
            <person name="Simison M."/>
            <person name="Cherry J.M."/>
        </authorList>
    </citation>
    <scope>GENOME REANNOTATION</scope>
    <source>
        <strain>ATCC 204508 / S288c</strain>
    </source>
</reference>
<reference key="3">
    <citation type="journal article" date="2003" name="Genome Res.">
        <title>Systematic discovery of new genes in the Saccharomyces cerevisiae genome.</title>
        <authorList>
            <person name="Kessler M.M."/>
            <person name="Zeng Q."/>
            <person name="Hogan S."/>
            <person name="Cook R."/>
            <person name="Morales A.J."/>
            <person name="Cottarel G."/>
        </authorList>
    </citation>
    <scope>GENOME REANNOTATION</scope>
</reference>
<comment type="miscellaneous">
    <text evidence="1">Completely overlaps RPL36B.</text>
</comment>
<comment type="caution">
    <text evidence="2">Product of a dubious gene prediction unlikely to encode a functional protein. Because of that it is not part of the S.cerevisiae S288c complete/reference proteome set.</text>
</comment>
<dbReference type="EMBL" id="Z67751">
    <property type="status" value="NOT_ANNOTATED_CDS"/>
    <property type="molecule type" value="Genomic_DNA"/>
</dbReference>
<dbReference type="EMBL" id="Z73605">
    <property type="status" value="NOT_ANNOTATED_CDS"/>
    <property type="molecule type" value="Genomic_DNA"/>
</dbReference>
<dbReference type="EMBL" id="Z73606">
    <property type="status" value="NOT_ANNOTATED_CDS"/>
    <property type="molecule type" value="Genomic_DNA"/>
</dbReference>
<dbReference type="PaxDb" id="4932-YPL250W-A"/>
<dbReference type="EnsemblFungi" id="YPL250W-A_mRNA">
    <property type="protein sequence ID" value="YPL250W-A"/>
    <property type="gene ID" value="YPL250W-A"/>
</dbReference>
<dbReference type="AGR" id="SGD:S000028589"/>
<dbReference type="SGD" id="S000028589">
    <property type="gene designation" value="YPL250W-A"/>
</dbReference>
<dbReference type="HOGENOM" id="CLU_2374389_0_0_1"/>
<accession>P0C5S0</accession>
<protein>
    <recommendedName>
        <fullName>Putative uncharacterized protein YPL250W-A</fullName>
    </recommendedName>
</protein>
<organism>
    <name type="scientific">Saccharomyces cerevisiae (strain ATCC 204508 / S288c)</name>
    <name type="common">Baker's yeast</name>
    <dbReference type="NCBI Taxonomy" id="559292"/>
    <lineage>
        <taxon>Eukaryota</taxon>
        <taxon>Fungi</taxon>
        <taxon>Dikarya</taxon>
        <taxon>Ascomycota</taxon>
        <taxon>Saccharomycotina</taxon>
        <taxon>Saccharomycetes</taxon>
        <taxon>Saccharomycetales</taxon>
        <taxon>Saccharomycetaceae</taxon>
        <taxon>Saccharomyces</taxon>
    </lineage>
</organism>